<comment type="catalytic activity">
    <reaction evidence="1">
        <text>sulfate + ATP + H(+) = adenosine 5'-phosphosulfate + diphosphate</text>
        <dbReference type="Rhea" id="RHEA:18133"/>
        <dbReference type="ChEBI" id="CHEBI:15378"/>
        <dbReference type="ChEBI" id="CHEBI:16189"/>
        <dbReference type="ChEBI" id="CHEBI:30616"/>
        <dbReference type="ChEBI" id="CHEBI:33019"/>
        <dbReference type="ChEBI" id="CHEBI:58243"/>
        <dbReference type="EC" id="2.7.7.4"/>
    </reaction>
</comment>
<comment type="pathway">
    <text evidence="1">Sulfur metabolism; hydrogen sulfide biosynthesis; sulfite from sulfate: step 1/3.</text>
</comment>
<comment type="similarity">
    <text evidence="1">Belongs to the sulfate adenylyltransferase family.</text>
</comment>
<sequence length="392" mass="44442">MSHNPDAIAPHGGQLVNRIATPEQREEFLSKADFLPRVQLDDRAVSDVEMIAIGAFSPLTGFMSQEDYDRTVTEMRLANGLVWSIPITLSVTEEVASPLQEGGLIRLDNSRGEFIAVLQLTQKYNYDKTREAINVYRTDDVKHPGVQVLYSQGTVHLAGDIWLLQREPHPQFPTYQIDPSASRQLFKDKGWKTIVGFQTRNPIHRAHEYIQKCALEIVDGLFLHPLVGATKEDDIAADVRMRCYEILLEHYYPLDRVTLAINPAAMRYAGPREAIFHALVRKNYGCTHFIVGRDHAGVGDYYGTYDAQYIFDEFAPGELGIVPMKFEHAFYCTRTKQMATSKTSPSRPEERIHLSGTKVREMLRRGELPPPEFSRPEVAAELARAMRIEVPV</sequence>
<name>SAT_NOSP7</name>
<protein>
    <recommendedName>
        <fullName evidence="1">Sulfate adenylyltransferase</fullName>
        <ecNumber evidence="1">2.7.7.4</ecNumber>
    </recommendedName>
    <alternativeName>
        <fullName evidence="1">ATP-sulfurylase</fullName>
    </alternativeName>
    <alternativeName>
        <fullName evidence="1">Sulfate adenylate transferase</fullName>
        <shortName evidence="1">SAT</shortName>
    </alternativeName>
</protein>
<dbReference type="EC" id="2.7.7.4" evidence="1"/>
<dbReference type="EMBL" id="CP001037">
    <property type="protein sequence ID" value="ACC83755.1"/>
    <property type="molecule type" value="Genomic_DNA"/>
</dbReference>
<dbReference type="RefSeq" id="WP_012411701.1">
    <property type="nucleotide sequence ID" value="NC_010628.1"/>
</dbReference>
<dbReference type="SMR" id="B2J5M3"/>
<dbReference type="STRING" id="63737.Npun_F5448"/>
<dbReference type="EnsemblBacteria" id="ACC83755">
    <property type="protein sequence ID" value="ACC83755"/>
    <property type="gene ID" value="Npun_F5448"/>
</dbReference>
<dbReference type="KEGG" id="npu:Npun_F5448"/>
<dbReference type="eggNOG" id="COG2046">
    <property type="taxonomic scope" value="Bacteria"/>
</dbReference>
<dbReference type="HOGENOM" id="CLU_022950_1_1_3"/>
<dbReference type="OrthoDB" id="9804504at2"/>
<dbReference type="PhylomeDB" id="B2J5M3"/>
<dbReference type="UniPathway" id="UPA00140">
    <property type="reaction ID" value="UER00204"/>
</dbReference>
<dbReference type="Proteomes" id="UP000001191">
    <property type="component" value="Chromosome"/>
</dbReference>
<dbReference type="GO" id="GO:0005524">
    <property type="term" value="F:ATP binding"/>
    <property type="evidence" value="ECO:0007669"/>
    <property type="project" value="UniProtKB-KW"/>
</dbReference>
<dbReference type="GO" id="GO:0004781">
    <property type="term" value="F:sulfate adenylyltransferase (ATP) activity"/>
    <property type="evidence" value="ECO:0007669"/>
    <property type="project" value="UniProtKB-UniRule"/>
</dbReference>
<dbReference type="GO" id="GO:0070814">
    <property type="term" value="P:hydrogen sulfide biosynthetic process"/>
    <property type="evidence" value="ECO:0007669"/>
    <property type="project" value="UniProtKB-UniRule"/>
</dbReference>
<dbReference type="GO" id="GO:0000103">
    <property type="term" value="P:sulfate assimilation"/>
    <property type="evidence" value="ECO:0007669"/>
    <property type="project" value="UniProtKB-UniRule"/>
</dbReference>
<dbReference type="CDD" id="cd00517">
    <property type="entry name" value="ATPS"/>
    <property type="match status" value="1"/>
</dbReference>
<dbReference type="Gene3D" id="3.40.50.620">
    <property type="entry name" value="HUPs"/>
    <property type="match status" value="1"/>
</dbReference>
<dbReference type="Gene3D" id="3.10.400.10">
    <property type="entry name" value="Sulfate adenylyltransferase"/>
    <property type="match status" value="1"/>
</dbReference>
<dbReference type="HAMAP" id="MF_00066">
    <property type="entry name" value="Sulf_adenylyltr"/>
    <property type="match status" value="1"/>
</dbReference>
<dbReference type="InterPro" id="IPR025980">
    <property type="entry name" value="ATP-Sase_PUA-like_dom"/>
</dbReference>
<dbReference type="InterPro" id="IPR015947">
    <property type="entry name" value="PUA-like_sf"/>
</dbReference>
<dbReference type="InterPro" id="IPR014729">
    <property type="entry name" value="Rossmann-like_a/b/a_fold"/>
</dbReference>
<dbReference type="InterPro" id="IPR020792">
    <property type="entry name" value="SO4_adenylyltransferase_pro"/>
</dbReference>
<dbReference type="InterPro" id="IPR024951">
    <property type="entry name" value="Sulfurylase_cat_dom"/>
</dbReference>
<dbReference type="InterPro" id="IPR002650">
    <property type="entry name" value="Sulphate_adenylyltransferase"/>
</dbReference>
<dbReference type="NCBIfam" id="NF003166">
    <property type="entry name" value="PRK04149.1"/>
    <property type="match status" value="1"/>
</dbReference>
<dbReference type="NCBIfam" id="TIGR00339">
    <property type="entry name" value="sopT"/>
    <property type="match status" value="1"/>
</dbReference>
<dbReference type="PANTHER" id="PTHR43509">
    <property type="match status" value="1"/>
</dbReference>
<dbReference type="PANTHER" id="PTHR43509:SF1">
    <property type="entry name" value="SULFATE ADENYLYLTRANSFERASE"/>
    <property type="match status" value="1"/>
</dbReference>
<dbReference type="Pfam" id="PF01747">
    <property type="entry name" value="ATP-sulfurylase"/>
    <property type="match status" value="1"/>
</dbReference>
<dbReference type="Pfam" id="PF14306">
    <property type="entry name" value="PUA_2"/>
    <property type="match status" value="1"/>
</dbReference>
<dbReference type="SUPFAM" id="SSF52374">
    <property type="entry name" value="Nucleotidylyl transferase"/>
    <property type="match status" value="1"/>
</dbReference>
<dbReference type="SUPFAM" id="SSF88697">
    <property type="entry name" value="PUA domain-like"/>
    <property type="match status" value="1"/>
</dbReference>
<keyword id="KW-0067">ATP-binding</keyword>
<keyword id="KW-0547">Nucleotide-binding</keyword>
<keyword id="KW-0548">Nucleotidyltransferase</keyword>
<keyword id="KW-1185">Reference proteome</keyword>
<keyword id="KW-0808">Transferase</keyword>
<proteinExistence type="inferred from homology"/>
<evidence type="ECO:0000255" key="1">
    <source>
        <dbReference type="HAMAP-Rule" id="MF_00066"/>
    </source>
</evidence>
<organism>
    <name type="scientific">Nostoc punctiforme (strain ATCC 29133 / PCC 73102)</name>
    <dbReference type="NCBI Taxonomy" id="63737"/>
    <lineage>
        <taxon>Bacteria</taxon>
        <taxon>Bacillati</taxon>
        <taxon>Cyanobacteriota</taxon>
        <taxon>Cyanophyceae</taxon>
        <taxon>Nostocales</taxon>
        <taxon>Nostocaceae</taxon>
        <taxon>Nostoc</taxon>
    </lineage>
</organism>
<gene>
    <name evidence="1" type="primary">sat</name>
    <name type="ordered locus">Npun_F5448</name>
</gene>
<accession>B2J5M3</accession>
<feature type="chain" id="PRO_1000092259" description="Sulfate adenylyltransferase">
    <location>
        <begin position="1"/>
        <end position="392"/>
    </location>
</feature>
<reference key="1">
    <citation type="journal article" date="2013" name="Plant Physiol.">
        <title>A Nostoc punctiforme Sugar Transporter Necessary to Establish a Cyanobacterium-Plant Symbiosis.</title>
        <authorList>
            <person name="Ekman M."/>
            <person name="Picossi S."/>
            <person name="Campbell E.L."/>
            <person name="Meeks J.C."/>
            <person name="Flores E."/>
        </authorList>
    </citation>
    <scope>NUCLEOTIDE SEQUENCE [LARGE SCALE GENOMIC DNA]</scope>
    <source>
        <strain>ATCC 29133 / PCC 73102</strain>
    </source>
</reference>